<keyword id="KW-0627">Porphyrin biosynthesis</keyword>
<keyword id="KW-0808">Transferase</keyword>
<reference key="1">
    <citation type="journal article" date="2004" name="Nucleic Acids Res.">
        <title>Unique features revealed by the genome sequence of Acinetobacter sp. ADP1, a versatile and naturally transformation competent bacterium.</title>
        <authorList>
            <person name="Barbe V."/>
            <person name="Vallenet D."/>
            <person name="Fonknechten N."/>
            <person name="Kreimeyer A."/>
            <person name="Oztas S."/>
            <person name="Labarre L."/>
            <person name="Cruveiller S."/>
            <person name="Robert C."/>
            <person name="Duprat S."/>
            <person name="Wincker P."/>
            <person name="Ornston L.N."/>
            <person name="Weissenbach J."/>
            <person name="Marliere P."/>
            <person name="Cohen G.N."/>
            <person name="Medigue C."/>
        </authorList>
    </citation>
    <scope>NUCLEOTIDE SEQUENCE [LARGE SCALE GENOMIC DNA]</scope>
    <source>
        <strain>ATCC 33305 / BD413 / ADP1</strain>
    </source>
</reference>
<proteinExistence type="inferred from homology"/>
<feature type="chain" id="PRO_0000142899" description="Porphobilinogen deaminase">
    <location>
        <begin position="1"/>
        <end position="311"/>
    </location>
</feature>
<feature type="modified residue" description="S-(dipyrrolylmethanemethyl)cysteine" evidence="1">
    <location>
        <position position="245"/>
    </location>
</feature>
<gene>
    <name evidence="1" type="primary">hemC</name>
    <name type="ordered locus">ACIAD0286</name>
</gene>
<evidence type="ECO:0000255" key="1">
    <source>
        <dbReference type="HAMAP-Rule" id="MF_00260"/>
    </source>
</evidence>
<name>HEM3_ACIAD</name>
<protein>
    <recommendedName>
        <fullName evidence="1">Porphobilinogen deaminase</fullName>
        <shortName evidence="1">PBG</shortName>
        <ecNumber evidence="1">2.5.1.61</ecNumber>
    </recommendedName>
    <alternativeName>
        <fullName evidence="1">Hydroxymethylbilane synthase</fullName>
        <shortName evidence="1">HMBS</shortName>
    </alternativeName>
    <alternativeName>
        <fullName evidence="1">Pre-uroporphyrinogen synthase</fullName>
    </alternativeName>
</protein>
<organism>
    <name type="scientific">Acinetobacter baylyi (strain ATCC 33305 / BD413 / ADP1)</name>
    <dbReference type="NCBI Taxonomy" id="62977"/>
    <lineage>
        <taxon>Bacteria</taxon>
        <taxon>Pseudomonadati</taxon>
        <taxon>Pseudomonadota</taxon>
        <taxon>Gammaproteobacteria</taxon>
        <taxon>Moraxellales</taxon>
        <taxon>Moraxellaceae</taxon>
        <taxon>Acinetobacter</taxon>
    </lineage>
</organism>
<sequence>MISILMQTLKIATRQSPLALWQAEHIRDRLQALYPELKVELVKFVTQGDKILDTPLAKIGGKGLFVKELEAALLDGRADLAVHSMKDVPMHLPEGLSLAVICEREDPLDAFVSNHVMSFDQLPLGARVGTSSLRRKCQILKQRPDLEIIDLRGNVGTRLAKLDDGQYDAIVLASAGLKRLGLISRIRHSINAEISLPAVGQGALGLECRANDKKILDLIAPLAHQPTSACVRAERAFNAYLEGGCQVPIAGFATLTQECLTLEGRVGSVDGKTLLKDHVEGHADQAEVLGVQLAKQLLAQGAGELLRDLYQ</sequence>
<accession>Q6FFA9</accession>
<dbReference type="EC" id="2.5.1.61" evidence="1"/>
<dbReference type="EMBL" id="CR543861">
    <property type="protein sequence ID" value="CAG67248.1"/>
    <property type="molecule type" value="Genomic_DNA"/>
</dbReference>
<dbReference type="SMR" id="Q6FFA9"/>
<dbReference type="STRING" id="202950.GCA_001485005_00557"/>
<dbReference type="KEGG" id="aci:ACIAD0286"/>
<dbReference type="eggNOG" id="COG0181">
    <property type="taxonomic scope" value="Bacteria"/>
</dbReference>
<dbReference type="HOGENOM" id="CLU_019704_0_2_6"/>
<dbReference type="UniPathway" id="UPA00251">
    <property type="reaction ID" value="UER00319"/>
</dbReference>
<dbReference type="Proteomes" id="UP000000430">
    <property type="component" value="Chromosome"/>
</dbReference>
<dbReference type="GO" id="GO:0005737">
    <property type="term" value="C:cytoplasm"/>
    <property type="evidence" value="ECO:0007669"/>
    <property type="project" value="TreeGrafter"/>
</dbReference>
<dbReference type="GO" id="GO:0004418">
    <property type="term" value="F:hydroxymethylbilane synthase activity"/>
    <property type="evidence" value="ECO:0007669"/>
    <property type="project" value="UniProtKB-UniRule"/>
</dbReference>
<dbReference type="GO" id="GO:0006782">
    <property type="term" value="P:protoporphyrinogen IX biosynthetic process"/>
    <property type="evidence" value="ECO:0007669"/>
    <property type="project" value="UniProtKB-UniRule"/>
</dbReference>
<dbReference type="CDD" id="cd13646">
    <property type="entry name" value="PBP2_EcHMBS_like"/>
    <property type="match status" value="1"/>
</dbReference>
<dbReference type="FunFam" id="3.40.190.10:FF:000004">
    <property type="entry name" value="Porphobilinogen deaminase"/>
    <property type="match status" value="1"/>
</dbReference>
<dbReference type="FunFam" id="3.40.190.10:FF:000005">
    <property type="entry name" value="Porphobilinogen deaminase"/>
    <property type="match status" value="1"/>
</dbReference>
<dbReference type="Gene3D" id="3.40.190.10">
    <property type="entry name" value="Periplasmic binding protein-like II"/>
    <property type="match status" value="2"/>
</dbReference>
<dbReference type="Gene3D" id="3.30.160.40">
    <property type="entry name" value="Porphobilinogen deaminase, C-terminal domain"/>
    <property type="match status" value="1"/>
</dbReference>
<dbReference type="HAMAP" id="MF_00260">
    <property type="entry name" value="Porphobil_deam"/>
    <property type="match status" value="1"/>
</dbReference>
<dbReference type="InterPro" id="IPR000860">
    <property type="entry name" value="HemC"/>
</dbReference>
<dbReference type="InterPro" id="IPR022419">
    <property type="entry name" value="Porphobilin_deaminase_cofac_BS"/>
</dbReference>
<dbReference type="InterPro" id="IPR022417">
    <property type="entry name" value="Porphobilin_deaminase_N"/>
</dbReference>
<dbReference type="InterPro" id="IPR022418">
    <property type="entry name" value="Porphobilinogen_deaminase_C"/>
</dbReference>
<dbReference type="InterPro" id="IPR036803">
    <property type="entry name" value="Porphobilinogen_deaminase_C_sf"/>
</dbReference>
<dbReference type="NCBIfam" id="TIGR00212">
    <property type="entry name" value="hemC"/>
    <property type="match status" value="1"/>
</dbReference>
<dbReference type="PANTHER" id="PTHR11557">
    <property type="entry name" value="PORPHOBILINOGEN DEAMINASE"/>
    <property type="match status" value="1"/>
</dbReference>
<dbReference type="PANTHER" id="PTHR11557:SF0">
    <property type="entry name" value="PORPHOBILINOGEN DEAMINASE"/>
    <property type="match status" value="1"/>
</dbReference>
<dbReference type="Pfam" id="PF01379">
    <property type="entry name" value="Porphobil_deam"/>
    <property type="match status" value="1"/>
</dbReference>
<dbReference type="Pfam" id="PF03900">
    <property type="entry name" value="Porphobil_deamC"/>
    <property type="match status" value="1"/>
</dbReference>
<dbReference type="PIRSF" id="PIRSF001438">
    <property type="entry name" value="4pyrrol_synth_OHMeBilane_synth"/>
    <property type="match status" value="1"/>
</dbReference>
<dbReference type="PRINTS" id="PR00151">
    <property type="entry name" value="PORPHBDMNASE"/>
</dbReference>
<dbReference type="SUPFAM" id="SSF53850">
    <property type="entry name" value="Periplasmic binding protein-like II"/>
    <property type="match status" value="1"/>
</dbReference>
<dbReference type="SUPFAM" id="SSF54782">
    <property type="entry name" value="Porphobilinogen deaminase (hydroxymethylbilane synthase), C-terminal domain"/>
    <property type="match status" value="1"/>
</dbReference>
<dbReference type="PROSITE" id="PS00533">
    <property type="entry name" value="PORPHOBILINOGEN_DEAM"/>
    <property type="match status" value="1"/>
</dbReference>
<comment type="function">
    <text evidence="1">Tetrapolymerization of the monopyrrole PBG into the hydroxymethylbilane pre-uroporphyrinogen in several discrete steps.</text>
</comment>
<comment type="catalytic activity">
    <reaction evidence="1">
        <text>4 porphobilinogen + H2O = hydroxymethylbilane + 4 NH4(+)</text>
        <dbReference type="Rhea" id="RHEA:13185"/>
        <dbReference type="ChEBI" id="CHEBI:15377"/>
        <dbReference type="ChEBI" id="CHEBI:28938"/>
        <dbReference type="ChEBI" id="CHEBI:57845"/>
        <dbReference type="ChEBI" id="CHEBI:58126"/>
        <dbReference type="EC" id="2.5.1.61"/>
    </reaction>
</comment>
<comment type="cofactor">
    <cofactor evidence="1">
        <name>dipyrromethane</name>
        <dbReference type="ChEBI" id="CHEBI:60342"/>
    </cofactor>
    <text evidence="1">Binds 1 dipyrromethane group covalently.</text>
</comment>
<comment type="pathway">
    <text evidence="1">Porphyrin-containing compound metabolism; protoporphyrin-IX biosynthesis; coproporphyrinogen-III from 5-aminolevulinate: step 2/4.</text>
</comment>
<comment type="subunit">
    <text evidence="1">Monomer.</text>
</comment>
<comment type="miscellaneous">
    <text evidence="1">The porphobilinogen subunits are added to the dipyrromethane group.</text>
</comment>
<comment type="similarity">
    <text evidence="1">Belongs to the HMBS family.</text>
</comment>